<comment type="function">
    <text evidence="1">Catalyzes the phosphorylation of pantothenate (Pan), the first step in CoA biosynthesis.</text>
</comment>
<comment type="catalytic activity">
    <reaction evidence="1">
        <text>(R)-pantothenate + ATP = (R)-4'-phosphopantothenate + ADP + H(+)</text>
        <dbReference type="Rhea" id="RHEA:16373"/>
        <dbReference type="ChEBI" id="CHEBI:10986"/>
        <dbReference type="ChEBI" id="CHEBI:15378"/>
        <dbReference type="ChEBI" id="CHEBI:29032"/>
        <dbReference type="ChEBI" id="CHEBI:30616"/>
        <dbReference type="ChEBI" id="CHEBI:456216"/>
        <dbReference type="EC" id="2.7.1.33"/>
    </reaction>
</comment>
<comment type="cofactor">
    <cofactor evidence="1">
        <name>NH4(+)</name>
        <dbReference type="ChEBI" id="CHEBI:28938"/>
    </cofactor>
    <cofactor evidence="1">
        <name>K(+)</name>
        <dbReference type="ChEBI" id="CHEBI:29103"/>
    </cofactor>
    <text evidence="1">A monovalent cation. Ammonium or potassium.</text>
</comment>
<comment type="pathway">
    <text evidence="1">Cofactor biosynthesis; coenzyme A biosynthesis; CoA from (R)-pantothenate: step 1/5.</text>
</comment>
<comment type="subunit">
    <text evidence="1">Homodimer.</text>
</comment>
<comment type="subcellular location">
    <subcellularLocation>
        <location evidence="1">Cytoplasm</location>
    </subcellularLocation>
</comment>
<comment type="similarity">
    <text evidence="1">Belongs to the type III pantothenate kinase family.</text>
</comment>
<comment type="sequence caution" evidence="2">
    <conflict type="erroneous initiation">
        <sequence resource="EMBL-CDS" id="AAC66882"/>
    </conflict>
    <text>Truncated N-terminus.</text>
</comment>
<feature type="chain" id="PRO_0000267502" description="Type III pantothenate kinase">
    <location>
        <begin position="1"/>
        <end position="262"/>
    </location>
</feature>
<feature type="active site" description="Proton acceptor" evidence="1">
    <location>
        <position position="111"/>
    </location>
</feature>
<feature type="binding site" evidence="1">
    <location>
        <begin position="12"/>
        <end position="19"/>
    </location>
    <ligand>
        <name>ATP</name>
        <dbReference type="ChEBI" id="CHEBI:30616"/>
    </ligand>
</feature>
<feature type="binding site" evidence="1">
    <location>
        <position position="94"/>
    </location>
    <ligand>
        <name>substrate</name>
    </ligand>
</feature>
<feature type="binding site" evidence="1">
    <location>
        <begin position="109"/>
        <end position="112"/>
    </location>
    <ligand>
        <name>substrate</name>
    </ligand>
</feature>
<feature type="binding site" evidence="1">
    <location>
        <position position="132"/>
    </location>
    <ligand>
        <name>K(+)</name>
        <dbReference type="ChEBI" id="CHEBI:29103"/>
    </ligand>
</feature>
<feature type="binding site" evidence="1">
    <location>
        <position position="135"/>
    </location>
    <ligand>
        <name>ATP</name>
        <dbReference type="ChEBI" id="CHEBI:30616"/>
    </ligand>
</feature>
<feature type="binding site" evidence="1">
    <location>
        <position position="187"/>
    </location>
    <ligand>
        <name>substrate</name>
    </ligand>
</feature>
<proteinExistence type="inferred from homology"/>
<gene>
    <name evidence="1" type="primary">coaX</name>
    <name type="ordered locus">BB_0527</name>
</gene>
<name>COAX_BORBU</name>
<sequence length="262" mass="29823">MNKPLLSELIIDIGNTSIAFALFKDNQVNLFIKMKTNLMLRYDEVYSFFEENFDFNVNKVFISSVVPILNETFKNVIFSFFKIKPLFIGFDLNYDLTFNPYKSDKFLLGSDVFANLVAAIENYSFENVLVVDLGTACTIFAVSRQDGILGGIINSGPLINFNSLLDNAYLIKKFPISTPNNLLERTTSGSVNSGLFYQYKYLIEGVYRDIKQMYKKKFNLIITGGNADLILSLIEIEFIFNIHLTVEGVRILGNSIDFKFVN</sequence>
<accession>O51477</accession>
<keyword id="KW-0067">ATP-binding</keyword>
<keyword id="KW-0173">Coenzyme A biosynthesis</keyword>
<keyword id="KW-0963">Cytoplasm</keyword>
<keyword id="KW-0418">Kinase</keyword>
<keyword id="KW-0479">Metal-binding</keyword>
<keyword id="KW-0547">Nucleotide-binding</keyword>
<keyword id="KW-0630">Potassium</keyword>
<keyword id="KW-1185">Reference proteome</keyword>
<keyword id="KW-0808">Transferase</keyword>
<dbReference type="EC" id="2.7.1.33" evidence="1"/>
<dbReference type="EMBL" id="AE000783">
    <property type="protein sequence ID" value="AAC66882.2"/>
    <property type="status" value="ALT_INIT"/>
    <property type="molecule type" value="Genomic_DNA"/>
</dbReference>
<dbReference type="PIR" id="F70165">
    <property type="entry name" value="F70165"/>
</dbReference>
<dbReference type="RefSeq" id="NP_212661.2">
    <property type="nucleotide sequence ID" value="NC_001318.1"/>
</dbReference>
<dbReference type="RefSeq" id="WP_020948753.1">
    <property type="nucleotide sequence ID" value="NC_001318.1"/>
</dbReference>
<dbReference type="SMR" id="O51477"/>
<dbReference type="STRING" id="224326.BB_0527"/>
<dbReference type="PaxDb" id="224326-BB_0527"/>
<dbReference type="EnsemblBacteria" id="AAC66882">
    <property type="protein sequence ID" value="AAC66882"/>
    <property type="gene ID" value="BB_0527"/>
</dbReference>
<dbReference type="KEGG" id="bbu:BB_0527"/>
<dbReference type="PATRIC" id="fig|224326.49.peg.917"/>
<dbReference type="HOGENOM" id="CLU_066627_1_1_12"/>
<dbReference type="OrthoDB" id="350393at2"/>
<dbReference type="UniPathway" id="UPA00241">
    <property type="reaction ID" value="UER00352"/>
</dbReference>
<dbReference type="Proteomes" id="UP000001807">
    <property type="component" value="Chromosome"/>
</dbReference>
<dbReference type="GO" id="GO:0005737">
    <property type="term" value="C:cytoplasm"/>
    <property type="evidence" value="ECO:0007669"/>
    <property type="project" value="UniProtKB-SubCell"/>
</dbReference>
<dbReference type="GO" id="GO:0005524">
    <property type="term" value="F:ATP binding"/>
    <property type="evidence" value="ECO:0007669"/>
    <property type="project" value="UniProtKB-UniRule"/>
</dbReference>
<dbReference type="GO" id="GO:0046872">
    <property type="term" value="F:metal ion binding"/>
    <property type="evidence" value="ECO:0007669"/>
    <property type="project" value="UniProtKB-KW"/>
</dbReference>
<dbReference type="GO" id="GO:0004594">
    <property type="term" value="F:pantothenate kinase activity"/>
    <property type="evidence" value="ECO:0007669"/>
    <property type="project" value="UniProtKB-UniRule"/>
</dbReference>
<dbReference type="GO" id="GO:0015937">
    <property type="term" value="P:coenzyme A biosynthetic process"/>
    <property type="evidence" value="ECO:0007669"/>
    <property type="project" value="UniProtKB-UniRule"/>
</dbReference>
<dbReference type="CDD" id="cd24015">
    <property type="entry name" value="ASKHA_NBD_PanK-III"/>
    <property type="match status" value="1"/>
</dbReference>
<dbReference type="Gene3D" id="3.30.420.40">
    <property type="match status" value="2"/>
</dbReference>
<dbReference type="HAMAP" id="MF_01274">
    <property type="entry name" value="Pantothen_kinase_3"/>
    <property type="match status" value="1"/>
</dbReference>
<dbReference type="InterPro" id="IPR043129">
    <property type="entry name" value="ATPase_NBD"/>
</dbReference>
<dbReference type="InterPro" id="IPR004619">
    <property type="entry name" value="Type_III_PanK"/>
</dbReference>
<dbReference type="NCBIfam" id="TIGR00671">
    <property type="entry name" value="baf"/>
    <property type="match status" value="1"/>
</dbReference>
<dbReference type="NCBIfam" id="NF009863">
    <property type="entry name" value="PRK13326.1"/>
    <property type="match status" value="1"/>
</dbReference>
<dbReference type="PANTHER" id="PTHR34265">
    <property type="entry name" value="TYPE III PANTOTHENATE KINASE"/>
    <property type="match status" value="1"/>
</dbReference>
<dbReference type="PANTHER" id="PTHR34265:SF1">
    <property type="entry name" value="TYPE III PANTOTHENATE KINASE"/>
    <property type="match status" value="1"/>
</dbReference>
<dbReference type="Pfam" id="PF03309">
    <property type="entry name" value="Pan_kinase"/>
    <property type="match status" value="1"/>
</dbReference>
<dbReference type="SUPFAM" id="SSF53067">
    <property type="entry name" value="Actin-like ATPase domain"/>
    <property type="match status" value="2"/>
</dbReference>
<evidence type="ECO:0000255" key="1">
    <source>
        <dbReference type="HAMAP-Rule" id="MF_01274"/>
    </source>
</evidence>
<evidence type="ECO:0000305" key="2"/>
<organism>
    <name type="scientific">Borreliella burgdorferi (strain ATCC 35210 / DSM 4680 / CIP 102532 / B31)</name>
    <name type="common">Borrelia burgdorferi</name>
    <dbReference type="NCBI Taxonomy" id="224326"/>
    <lineage>
        <taxon>Bacteria</taxon>
        <taxon>Pseudomonadati</taxon>
        <taxon>Spirochaetota</taxon>
        <taxon>Spirochaetia</taxon>
        <taxon>Spirochaetales</taxon>
        <taxon>Borreliaceae</taxon>
        <taxon>Borreliella</taxon>
    </lineage>
</organism>
<reference key="1">
    <citation type="journal article" date="1997" name="Nature">
        <title>Genomic sequence of a Lyme disease spirochaete, Borrelia burgdorferi.</title>
        <authorList>
            <person name="Fraser C.M."/>
            <person name="Casjens S."/>
            <person name="Huang W.M."/>
            <person name="Sutton G.G."/>
            <person name="Clayton R.A."/>
            <person name="Lathigra R."/>
            <person name="White O."/>
            <person name="Ketchum K.A."/>
            <person name="Dodson R.J."/>
            <person name="Hickey E.K."/>
            <person name="Gwinn M.L."/>
            <person name="Dougherty B.A."/>
            <person name="Tomb J.-F."/>
            <person name="Fleischmann R.D."/>
            <person name="Richardson D.L."/>
            <person name="Peterson J.D."/>
            <person name="Kerlavage A.R."/>
            <person name="Quackenbush J."/>
            <person name="Salzberg S.L."/>
            <person name="Hanson M."/>
            <person name="van Vugt R."/>
            <person name="Palmer N."/>
            <person name="Adams M.D."/>
            <person name="Gocayne J.D."/>
            <person name="Weidman J.F."/>
            <person name="Utterback T.R."/>
            <person name="Watthey L."/>
            <person name="McDonald L.A."/>
            <person name="Artiach P."/>
            <person name="Bowman C."/>
            <person name="Garland S.A."/>
            <person name="Fujii C."/>
            <person name="Cotton M.D."/>
            <person name="Horst K."/>
            <person name="Roberts K.M."/>
            <person name="Hatch B."/>
            <person name="Smith H.O."/>
            <person name="Venter J.C."/>
        </authorList>
    </citation>
    <scope>NUCLEOTIDE SEQUENCE [LARGE SCALE GENOMIC DNA]</scope>
    <source>
        <strain>ATCC 35210 / DSM 4680 / CIP 102532 / B31</strain>
    </source>
</reference>
<protein>
    <recommendedName>
        <fullName evidence="1">Type III pantothenate kinase</fullName>
        <ecNumber evidence="1">2.7.1.33</ecNumber>
    </recommendedName>
    <alternativeName>
        <fullName evidence="1">PanK-III</fullName>
    </alternativeName>
    <alternativeName>
        <fullName evidence="1">Pantothenic acid kinase</fullName>
    </alternativeName>
</protein>